<evidence type="ECO:0000255" key="1">
    <source>
        <dbReference type="HAMAP-Rule" id="MF_01303"/>
    </source>
</evidence>
<evidence type="ECO:0000269" key="2">
    <source>
    </source>
</evidence>
<evidence type="ECO:0000305" key="3">
    <source>
    </source>
</evidence>
<feature type="initiator methionine" description="Removed" evidence="2">
    <location>
        <position position="1"/>
    </location>
</feature>
<feature type="chain" id="PRO_0000062006" description="Photosystem I iron-sulfur center">
    <location>
        <begin position="2"/>
        <end position="81"/>
    </location>
</feature>
<feature type="domain" description="4Fe-4S ferredoxin-type 1" evidence="1">
    <location>
        <begin position="2"/>
        <end position="31"/>
    </location>
</feature>
<feature type="domain" description="4Fe-4S ferredoxin-type 2" evidence="1">
    <location>
        <begin position="39"/>
        <end position="68"/>
    </location>
</feature>
<feature type="binding site" evidence="1">
    <location>
        <position position="11"/>
    </location>
    <ligand>
        <name>[4Fe-4S] cluster</name>
        <dbReference type="ChEBI" id="CHEBI:49883"/>
        <label>1</label>
    </ligand>
</feature>
<feature type="binding site" evidence="1">
    <location>
        <position position="14"/>
    </location>
    <ligand>
        <name>[4Fe-4S] cluster</name>
        <dbReference type="ChEBI" id="CHEBI:49883"/>
        <label>1</label>
    </ligand>
</feature>
<feature type="binding site" evidence="1">
    <location>
        <position position="17"/>
    </location>
    <ligand>
        <name>[4Fe-4S] cluster</name>
        <dbReference type="ChEBI" id="CHEBI:49883"/>
        <label>1</label>
    </ligand>
</feature>
<feature type="binding site" evidence="1">
    <location>
        <position position="21"/>
    </location>
    <ligand>
        <name>[4Fe-4S] cluster</name>
        <dbReference type="ChEBI" id="CHEBI:49883"/>
        <label>2</label>
    </ligand>
</feature>
<feature type="binding site" evidence="1">
    <location>
        <position position="48"/>
    </location>
    <ligand>
        <name>[4Fe-4S] cluster</name>
        <dbReference type="ChEBI" id="CHEBI:49883"/>
        <label>2</label>
    </ligand>
</feature>
<feature type="binding site" evidence="1">
    <location>
        <position position="51"/>
    </location>
    <ligand>
        <name>[4Fe-4S] cluster</name>
        <dbReference type="ChEBI" id="CHEBI:49883"/>
        <label>2</label>
    </ligand>
</feature>
<feature type="binding site" evidence="1">
    <location>
        <position position="54"/>
    </location>
    <ligand>
        <name>[4Fe-4S] cluster</name>
        <dbReference type="ChEBI" id="CHEBI:49883"/>
        <label>2</label>
    </ligand>
</feature>
<feature type="binding site" evidence="1">
    <location>
        <position position="58"/>
    </location>
    <ligand>
        <name>[4Fe-4S] cluster</name>
        <dbReference type="ChEBI" id="CHEBI:49883"/>
        <label>1</label>
    </ligand>
</feature>
<accession>P62094</accession>
<accession>P07136</accession>
<accession>P25252</accession>
<accession>Q9MRU0</accession>
<accession>Q9T2J4</accession>
<dbReference type="EC" id="1.97.1.12" evidence="1"/>
<dbReference type="EMBL" id="Z00044">
    <property type="protein sequence ID" value="CAA77433.1"/>
    <property type="molecule type" value="Genomic_DNA"/>
</dbReference>
<dbReference type="EMBL" id="X05881">
    <property type="protein sequence ID" value="CAA29304.1"/>
    <property type="molecule type" value="Genomic_DNA"/>
</dbReference>
<dbReference type="EMBL" id="X53842">
    <property type="protein sequence ID" value="CAA37836.1"/>
    <property type="molecule type" value="Genomic_DNA"/>
</dbReference>
<dbReference type="PIR" id="S07170">
    <property type="entry name" value="S07170"/>
</dbReference>
<dbReference type="RefSeq" id="NP_054558.1">
    <property type="nucleotide sequence ID" value="NC_001879.2"/>
</dbReference>
<dbReference type="SMR" id="P62094"/>
<dbReference type="GeneID" id="800430"/>
<dbReference type="KEGG" id="nta:800430"/>
<dbReference type="OMA" id="GHMSHAV"/>
<dbReference type="OrthoDB" id="9at2759"/>
<dbReference type="Proteomes" id="UP000084051">
    <property type="component" value="Unplaced"/>
</dbReference>
<dbReference type="GO" id="GO:0009535">
    <property type="term" value="C:chloroplast thylakoid membrane"/>
    <property type="evidence" value="ECO:0007669"/>
    <property type="project" value="UniProtKB-SubCell"/>
</dbReference>
<dbReference type="GO" id="GO:0009522">
    <property type="term" value="C:photosystem I"/>
    <property type="evidence" value="ECO:0007669"/>
    <property type="project" value="UniProtKB-KW"/>
</dbReference>
<dbReference type="GO" id="GO:0051539">
    <property type="term" value="F:4 iron, 4 sulfur cluster binding"/>
    <property type="evidence" value="ECO:0007669"/>
    <property type="project" value="UniProtKB-KW"/>
</dbReference>
<dbReference type="GO" id="GO:0009055">
    <property type="term" value="F:electron transfer activity"/>
    <property type="evidence" value="ECO:0007669"/>
    <property type="project" value="UniProtKB-UniRule"/>
</dbReference>
<dbReference type="GO" id="GO:0046872">
    <property type="term" value="F:metal ion binding"/>
    <property type="evidence" value="ECO:0007669"/>
    <property type="project" value="UniProtKB-KW"/>
</dbReference>
<dbReference type="GO" id="GO:0016491">
    <property type="term" value="F:oxidoreductase activity"/>
    <property type="evidence" value="ECO:0007669"/>
    <property type="project" value="UniProtKB-KW"/>
</dbReference>
<dbReference type="GO" id="GO:0009773">
    <property type="term" value="P:photosynthetic electron transport in photosystem I"/>
    <property type="evidence" value="ECO:0007669"/>
    <property type="project" value="InterPro"/>
</dbReference>
<dbReference type="FunFam" id="3.30.70.20:FF:000001">
    <property type="entry name" value="Photosystem I iron-sulfur center"/>
    <property type="match status" value="1"/>
</dbReference>
<dbReference type="Gene3D" id="3.30.70.20">
    <property type="match status" value="1"/>
</dbReference>
<dbReference type="HAMAP" id="MF_01303">
    <property type="entry name" value="PSI_PsaC"/>
    <property type="match status" value="1"/>
</dbReference>
<dbReference type="InterPro" id="IPR017896">
    <property type="entry name" value="4Fe4S_Fe-S-bd"/>
</dbReference>
<dbReference type="InterPro" id="IPR017900">
    <property type="entry name" value="4Fe4S_Fe_S_CS"/>
</dbReference>
<dbReference type="InterPro" id="IPR050157">
    <property type="entry name" value="PSI_iron-sulfur_center"/>
</dbReference>
<dbReference type="InterPro" id="IPR017491">
    <property type="entry name" value="PSI_PsaC"/>
</dbReference>
<dbReference type="NCBIfam" id="TIGR03048">
    <property type="entry name" value="PS_I_psaC"/>
    <property type="match status" value="1"/>
</dbReference>
<dbReference type="PANTHER" id="PTHR24960:SF79">
    <property type="entry name" value="PHOTOSYSTEM I IRON-SULFUR CENTER"/>
    <property type="match status" value="1"/>
</dbReference>
<dbReference type="PANTHER" id="PTHR24960">
    <property type="entry name" value="PHOTOSYSTEM I IRON-SULFUR CENTER-RELATED"/>
    <property type="match status" value="1"/>
</dbReference>
<dbReference type="Pfam" id="PF14697">
    <property type="entry name" value="Fer4_21"/>
    <property type="match status" value="1"/>
</dbReference>
<dbReference type="SUPFAM" id="SSF54862">
    <property type="entry name" value="4Fe-4S ferredoxins"/>
    <property type="match status" value="1"/>
</dbReference>
<dbReference type="PROSITE" id="PS00198">
    <property type="entry name" value="4FE4S_FER_1"/>
    <property type="match status" value="2"/>
</dbReference>
<dbReference type="PROSITE" id="PS51379">
    <property type="entry name" value="4FE4S_FER_2"/>
    <property type="match status" value="2"/>
</dbReference>
<geneLocation type="chloroplast"/>
<name>PSAC_TOBAC</name>
<keyword id="KW-0004">4Fe-4S</keyword>
<keyword id="KW-0150">Chloroplast</keyword>
<keyword id="KW-0903">Direct protein sequencing</keyword>
<keyword id="KW-0249">Electron transport</keyword>
<keyword id="KW-0408">Iron</keyword>
<keyword id="KW-0411">Iron-sulfur</keyword>
<keyword id="KW-0472">Membrane</keyword>
<keyword id="KW-0479">Metal-binding</keyword>
<keyword id="KW-0560">Oxidoreductase</keyword>
<keyword id="KW-0602">Photosynthesis</keyword>
<keyword id="KW-0603">Photosystem I</keyword>
<keyword id="KW-0934">Plastid</keyword>
<keyword id="KW-1185">Reference proteome</keyword>
<keyword id="KW-0677">Repeat</keyword>
<keyword id="KW-0793">Thylakoid</keyword>
<keyword id="KW-0813">Transport</keyword>
<sequence length="81" mass="9038">MSHSVKIYDTCIGCTQCVRACPTDVLEMIPWDGCKAKQIASAPRTEDCVGCKRCESACPTDFLSVRVYLWHETTRSMGLAY</sequence>
<comment type="function">
    <text>Apoprotein for the two 4Fe-4S centers FA and FB of photosystem I (PSI); essential for photochemical activity. FB is the terminal electron acceptor of PSI, donating electrons to ferredoxin. The C-terminus interacts with PsaA/B/D and helps assemble the protein into the PSI complex. Required for binding of PsaD and PsaE to PSI. PSI is a plastocyanin-ferredoxin oxidoreductase, converting photonic excitation into a charge separation, which transfers an electron from the donor P700 chlorophyll pair to the spectroscopically characterized acceptors A0, A1, FX, FA and FB in turn.</text>
</comment>
<comment type="catalytic activity">
    <reaction evidence="1">
        <text>reduced [plastocyanin] + hnu + oxidized [2Fe-2S]-[ferredoxin] = oxidized [plastocyanin] + reduced [2Fe-2S]-[ferredoxin]</text>
        <dbReference type="Rhea" id="RHEA:30407"/>
        <dbReference type="Rhea" id="RHEA-COMP:10000"/>
        <dbReference type="Rhea" id="RHEA-COMP:10001"/>
        <dbReference type="Rhea" id="RHEA-COMP:10039"/>
        <dbReference type="Rhea" id="RHEA-COMP:10040"/>
        <dbReference type="ChEBI" id="CHEBI:29036"/>
        <dbReference type="ChEBI" id="CHEBI:30212"/>
        <dbReference type="ChEBI" id="CHEBI:33737"/>
        <dbReference type="ChEBI" id="CHEBI:33738"/>
        <dbReference type="ChEBI" id="CHEBI:49552"/>
        <dbReference type="EC" id="1.97.1.12"/>
    </reaction>
</comment>
<comment type="cofactor">
    <cofactor evidence="1">
        <name>[4Fe-4S] cluster</name>
        <dbReference type="ChEBI" id="CHEBI:49883"/>
    </cofactor>
    <text evidence="1">Binds 2 [4Fe-4S] clusters. Cluster 2 is most probably the spectroscopically characterized electron acceptor FA and cluster 1 is most probably FB.</text>
</comment>
<comment type="subunit">
    <text evidence="1">The eukaryotic PSI reaction center is composed of at least 11 subunits.</text>
</comment>
<comment type="subcellular location">
    <subcellularLocation>
        <location evidence="1">Plastid</location>
        <location evidence="1">Chloroplast thylakoid membrane</location>
        <topology evidence="1">Peripheral membrane protein</topology>
        <orientation evidence="1">Stromal side</orientation>
    </subcellularLocation>
</comment>
<comment type="caution">
    <text evidence="3">Was originally thought to originate from Synechocystis PCC6803.</text>
</comment>
<organism>
    <name type="scientific">Nicotiana tabacum</name>
    <name type="common">Common tobacco</name>
    <dbReference type="NCBI Taxonomy" id="4097"/>
    <lineage>
        <taxon>Eukaryota</taxon>
        <taxon>Viridiplantae</taxon>
        <taxon>Streptophyta</taxon>
        <taxon>Embryophyta</taxon>
        <taxon>Tracheophyta</taxon>
        <taxon>Spermatophyta</taxon>
        <taxon>Magnoliopsida</taxon>
        <taxon>eudicotyledons</taxon>
        <taxon>Gunneridae</taxon>
        <taxon>Pentapetalae</taxon>
        <taxon>asterids</taxon>
        <taxon>lamiids</taxon>
        <taxon>Solanales</taxon>
        <taxon>Solanaceae</taxon>
        <taxon>Nicotianoideae</taxon>
        <taxon>Nicotianeae</taxon>
        <taxon>Nicotiana</taxon>
    </lineage>
</organism>
<protein>
    <recommendedName>
        <fullName evidence="1">Photosystem I iron-sulfur center</fullName>
        <ecNumber evidence="1">1.97.1.12</ecNumber>
    </recommendedName>
    <alternativeName>
        <fullName evidence="1">9 kDa polypeptide</fullName>
    </alternativeName>
    <alternativeName>
        <fullName evidence="1">PSI-C</fullName>
    </alternativeName>
    <alternativeName>
        <fullName evidence="1">Photosystem I subunit VII</fullName>
    </alternativeName>
    <alternativeName>
        <fullName evidence="1">PsaC</fullName>
    </alternativeName>
</protein>
<proteinExistence type="evidence at protein level"/>
<gene>
    <name evidence="1" type="primary">psaC</name>
    <name type="synonym">frxA</name>
</gene>
<reference key="1">
    <citation type="journal article" date="1986" name="EMBO J.">
        <title>The complete nucleotide sequence of the tobacco chloroplast genome: its gene organization and expression.</title>
        <authorList>
            <person name="Shinozaki K."/>
            <person name="Ohme M."/>
            <person name="Tanaka M."/>
            <person name="Wakasugi T."/>
            <person name="Hayashida N."/>
            <person name="Matsubayashi T."/>
            <person name="Zaita N."/>
            <person name="Chunwongse J."/>
            <person name="Obokata J."/>
            <person name="Yamaguchi-Shinozaki K."/>
            <person name="Ohto C."/>
            <person name="Torazawa K."/>
            <person name="Meng B.-Y."/>
            <person name="Sugita M."/>
            <person name="Deno H."/>
            <person name="Kamogashira T."/>
            <person name="Yamada K."/>
            <person name="Kusuda J."/>
            <person name="Takaiwa F."/>
            <person name="Kato A."/>
            <person name="Tohdoh N."/>
            <person name="Shimada H."/>
            <person name="Sugiura M."/>
        </authorList>
    </citation>
    <scope>NUCLEOTIDE SEQUENCE [LARGE SCALE GENOMIC DNA]</scope>
    <source>
        <strain>cv. Bright Yellow 4</strain>
    </source>
</reference>
<reference key="2">
    <citation type="journal article" date="1987" name="Curr. Genet.">
        <title>The gene for the 9 kd polypeptide, a possible apoprotein for the iron-sulfur centers A and B of the photosystem I complex, in tobacco chloroplast DNA.</title>
        <authorList>
            <person name="Hayashida N."/>
            <person name="Matsubayashi T."/>
            <person name="Shinozaki K."/>
            <person name="Sugiura M."/>
            <person name="Inoue K."/>
            <person name="Hiyama T."/>
        </authorList>
    </citation>
    <scope>NUCLEOTIDE SEQUENCE [GENOMIC DNA]</scope>
    <scope>SEQUENCE REVISION</scope>
    <source>
        <strain>cv. Bright Yellow 4</strain>
    </source>
</reference>
<reference key="3">
    <citation type="journal article" date="1991" name="Plant Mol. Biol.">
        <title>Partial conservation of the 5' ndhE-psaC-ndhD 3' gene arrangement of chloroplasts in the cyanobacterium Synechocystis sp. PCC 6803: implications for NDH-D function in cyanobacteria and chloroplasts.</title>
        <authorList>
            <person name="Anderson S.L."/>
            <person name="McIntosh L."/>
        </authorList>
    </citation>
    <scope>NUCLEOTIDE SEQUENCE [GENOMIC DNA]</scope>
</reference>
<reference key="4">
    <citation type="journal article" date="1995" name="Plant Mol. Biol.">
        <title>Absence of PsaC subunit allows assembly of photosystem I core but prevents the binding of PsaD and PsaE in Synechocystis sp. PCC6803.</title>
        <authorList>
            <person name="Yu J."/>
            <person name="Smart L.B."/>
            <person name="Jung Y.-S."/>
            <person name="Golbeck J.H."/>
            <person name="McIntosh L."/>
        </authorList>
    </citation>
    <scope>SHOWS THAT SEQUENCE DESCRIBED IN PUBMED:1907869 ORIGINATES FROM NICOTIANA TABACUM</scope>
</reference>
<reference key="5">
    <citation type="journal article" date="1993" name="Plant Physiol.">
        <title>Molecular heterogeneity of photosystem I. psaD, psaE, psaF, psaH, and psaL are all present in isoforms in Nicotiana spp.</title>
        <authorList>
            <person name="Obokata J."/>
            <person name="Mikami K."/>
            <person name="Hayashida N."/>
            <person name="Nakamura M."/>
            <person name="Sugiura M."/>
        </authorList>
    </citation>
    <scope>PROTEIN SEQUENCE OF 2-29</scope>
    <source>
        <strain>cv. Bright Yellow 4</strain>
    </source>
</reference>